<dbReference type="EC" id="2.8.1.-" evidence="1"/>
<dbReference type="EMBL" id="CP000542">
    <property type="protein sequence ID" value="ABM57223.1"/>
    <property type="molecule type" value="Genomic_DNA"/>
</dbReference>
<dbReference type="RefSeq" id="WP_011809230.1">
    <property type="nucleotide sequence ID" value="NC_008786.1"/>
</dbReference>
<dbReference type="SMR" id="A1WHW6"/>
<dbReference type="STRING" id="391735.Veis_1463"/>
<dbReference type="GeneID" id="76460086"/>
<dbReference type="KEGG" id="vei:Veis_1463"/>
<dbReference type="eggNOG" id="COG0037">
    <property type="taxonomic scope" value="Bacteria"/>
</dbReference>
<dbReference type="HOGENOM" id="CLU_026481_0_0_4"/>
<dbReference type="OrthoDB" id="9801054at2"/>
<dbReference type="Proteomes" id="UP000000374">
    <property type="component" value="Chromosome"/>
</dbReference>
<dbReference type="GO" id="GO:0005737">
    <property type="term" value="C:cytoplasm"/>
    <property type="evidence" value="ECO:0007669"/>
    <property type="project" value="UniProtKB-SubCell"/>
</dbReference>
<dbReference type="GO" id="GO:0051539">
    <property type="term" value="F:4 iron, 4 sulfur cluster binding"/>
    <property type="evidence" value="ECO:0007669"/>
    <property type="project" value="UniProtKB-UniRule"/>
</dbReference>
<dbReference type="GO" id="GO:0005524">
    <property type="term" value="F:ATP binding"/>
    <property type="evidence" value="ECO:0007669"/>
    <property type="project" value="UniProtKB-UniRule"/>
</dbReference>
<dbReference type="GO" id="GO:0000287">
    <property type="term" value="F:magnesium ion binding"/>
    <property type="evidence" value="ECO:0007669"/>
    <property type="project" value="UniProtKB-UniRule"/>
</dbReference>
<dbReference type="GO" id="GO:0016783">
    <property type="term" value="F:sulfurtransferase activity"/>
    <property type="evidence" value="ECO:0007669"/>
    <property type="project" value="UniProtKB-UniRule"/>
</dbReference>
<dbReference type="GO" id="GO:0000049">
    <property type="term" value="F:tRNA binding"/>
    <property type="evidence" value="ECO:0007669"/>
    <property type="project" value="UniProtKB-KW"/>
</dbReference>
<dbReference type="GO" id="GO:0034227">
    <property type="term" value="P:tRNA thio-modification"/>
    <property type="evidence" value="ECO:0007669"/>
    <property type="project" value="UniProtKB-UniRule"/>
</dbReference>
<dbReference type="CDD" id="cd24138">
    <property type="entry name" value="TtcA-like"/>
    <property type="match status" value="1"/>
</dbReference>
<dbReference type="Gene3D" id="3.40.50.620">
    <property type="entry name" value="HUPs"/>
    <property type="match status" value="1"/>
</dbReference>
<dbReference type="HAMAP" id="MF_01850">
    <property type="entry name" value="TtcA"/>
    <property type="match status" value="1"/>
</dbReference>
<dbReference type="InterPro" id="IPR014729">
    <property type="entry name" value="Rossmann-like_a/b/a_fold"/>
</dbReference>
<dbReference type="InterPro" id="IPR011063">
    <property type="entry name" value="TilS/TtcA_N"/>
</dbReference>
<dbReference type="InterPro" id="IPR012089">
    <property type="entry name" value="tRNA_Cyd_32_2_STrfase"/>
</dbReference>
<dbReference type="NCBIfam" id="NF007972">
    <property type="entry name" value="PRK10696.1"/>
    <property type="match status" value="1"/>
</dbReference>
<dbReference type="PANTHER" id="PTHR43686:SF1">
    <property type="entry name" value="AMINOTRAN_5 DOMAIN-CONTAINING PROTEIN"/>
    <property type="match status" value="1"/>
</dbReference>
<dbReference type="PANTHER" id="PTHR43686">
    <property type="entry name" value="SULFURTRANSFERASE-RELATED"/>
    <property type="match status" value="1"/>
</dbReference>
<dbReference type="Pfam" id="PF01171">
    <property type="entry name" value="ATP_bind_3"/>
    <property type="match status" value="1"/>
</dbReference>
<dbReference type="SUPFAM" id="SSF52402">
    <property type="entry name" value="Adenine nucleotide alpha hydrolases-like"/>
    <property type="match status" value="1"/>
</dbReference>
<sequence>MGAVIDDSMPGPGADATGTGPSDARTERETRKLEKRLCRAVGKAIDDFHMIEAGDKVMVCMSGGKDSYTLLDILLKLRARAPIAFDLVAVNLDQKQPGFPAHVLPGYLASAGVPYHIETEDTYGIVKRLIPEGKTTCSLCSRLRRGILYRVASELGCTKIALGHHRDDILQTLLLNMFFGGKMKSMPPKLVSDDGQHVVIRPLAYVAEKDTARWAAQRNFPIIACNLCGSQQNLQRQQVGQMLREWEKKLPGRVENMFNALQNIVPSHLLDARLYDFKNARATGLASADGDKAFDPQELATPAEQVVQIVPTRRSS</sequence>
<feature type="chain" id="PRO_0000348860" description="tRNA-cytidine(32) 2-sulfurtransferase">
    <location>
        <begin position="1"/>
        <end position="316"/>
    </location>
</feature>
<feature type="region of interest" description="Disordered" evidence="2">
    <location>
        <begin position="1"/>
        <end position="31"/>
    </location>
</feature>
<feature type="short sequence motif" description="PP-loop motif" evidence="1">
    <location>
        <begin position="62"/>
        <end position="67"/>
    </location>
</feature>
<feature type="compositionally biased region" description="Low complexity" evidence="2">
    <location>
        <begin position="10"/>
        <end position="21"/>
    </location>
</feature>
<feature type="binding site" evidence="1">
    <location>
        <position position="137"/>
    </location>
    <ligand>
        <name>[4Fe-4S] cluster</name>
        <dbReference type="ChEBI" id="CHEBI:49883"/>
    </ligand>
</feature>
<feature type="binding site" evidence="1">
    <location>
        <position position="140"/>
    </location>
    <ligand>
        <name>[4Fe-4S] cluster</name>
        <dbReference type="ChEBI" id="CHEBI:49883"/>
    </ligand>
</feature>
<feature type="binding site" evidence="1">
    <location>
        <position position="228"/>
    </location>
    <ligand>
        <name>[4Fe-4S] cluster</name>
        <dbReference type="ChEBI" id="CHEBI:49883"/>
    </ligand>
</feature>
<proteinExistence type="inferred from homology"/>
<accession>A1WHW6</accession>
<name>TTCA_VEREI</name>
<evidence type="ECO:0000255" key="1">
    <source>
        <dbReference type="HAMAP-Rule" id="MF_01850"/>
    </source>
</evidence>
<evidence type="ECO:0000256" key="2">
    <source>
        <dbReference type="SAM" id="MobiDB-lite"/>
    </source>
</evidence>
<protein>
    <recommendedName>
        <fullName evidence="1">tRNA-cytidine(32) 2-sulfurtransferase</fullName>
        <ecNumber evidence="1">2.8.1.-</ecNumber>
    </recommendedName>
    <alternativeName>
        <fullName evidence="1">Two-thiocytidine biosynthesis protein A</fullName>
    </alternativeName>
    <alternativeName>
        <fullName evidence="1">tRNA 2-thiocytidine biosynthesis protein TtcA</fullName>
    </alternativeName>
</protein>
<keyword id="KW-0004">4Fe-4S</keyword>
<keyword id="KW-0067">ATP-binding</keyword>
<keyword id="KW-0963">Cytoplasm</keyword>
<keyword id="KW-0408">Iron</keyword>
<keyword id="KW-0411">Iron-sulfur</keyword>
<keyword id="KW-0460">Magnesium</keyword>
<keyword id="KW-0479">Metal-binding</keyword>
<keyword id="KW-0547">Nucleotide-binding</keyword>
<keyword id="KW-1185">Reference proteome</keyword>
<keyword id="KW-0694">RNA-binding</keyword>
<keyword id="KW-0808">Transferase</keyword>
<keyword id="KW-0819">tRNA processing</keyword>
<keyword id="KW-0820">tRNA-binding</keyword>
<comment type="function">
    <text evidence="1">Catalyzes the ATP-dependent 2-thiolation of cytidine in position 32 of tRNA, to form 2-thiocytidine (s(2)C32). The sulfur atoms are provided by the cysteine/cysteine desulfurase (IscS) system.</text>
</comment>
<comment type="catalytic activity">
    <reaction evidence="1">
        <text>cytidine(32) in tRNA + S-sulfanyl-L-cysteinyl-[cysteine desulfurase] + AH2 + ATP = 2-thiocytidine(32) in tRNA + L-cysteinyl-[cysteine desulfurase] + A + AMP + diphosphate + H(+)</text>
        <dbReference type="Rhea" id="RHEA:57048"/>
        <dbReference type="Rhea" id="RHEA-COMP:10288"/>
        <dbReference type="Rhea" id="RHEA-COMP:12157"/>
        <dbReference type="Rhea" id="RHEA-COMP:12158"/>
        <dbReference type="Rhea" id="RHEA-COMP:14821"/>
        <dbReference type="ChEBI" id="CHEBI:13193"/>
        <dbReference type="ChEBI" id="CHEBI:15378"/>
        <dbReference type="ChEBI" id="CHEBI:17499"/>
        <dbReference type="ChEBI" id="CHEBI:29950"/>
        <dbReference type="ChEBI" id="CHEBI:30616"/>
        <dbReference type="ChEBI" id="CHEBI:33019"/>
        <dbReference type="ChEBI" id="CHEBI:61963"/>
        <dbReference type="ChEBI" id="CHEBI:82748"/>
        <dbReference type="ChEBI" id="CHEBI:141453"/>
        <dbReference type="ChEBI" id="CHEBI:456215"/>
    </reaction>
    <physiologicalReaction direction="left-to-right" evidence="1">
        <dbReference type="Rhea" id="RHEA:57049"/>
    </physiologicalReaction>
</comment>
<comment type="cofactor">
    <cofactor evidence="1">
        <name>Mg(2+)</name>
        <dbReference type="ChEBI" id="CHEBI:18420"/>
    </cofactor>
</comment>
<comment type="cofactor">
    <cofactor evidence="1">
        <name>[4Fe-4S] cluster</name>
        <dbReference type="ChEBI" id="CHEBI:49883"/>
    </cofactor>
    <text evidence="1">Binds 1 [4Fe-4S] cluster per subunit. The cluster is chelated by three Cys residues, the fourth Fe has a free coordination site that may bind a sulfur atom transferred from the persulfide of IscS.</text>
</comment>
<comment type="pathway">
    <text evidence="1">tRNA modification.</text>
</comment>
<comment type="subunit">
    <text evidence="1">Homodimer.</text>
</comment>
<comment type="subcellular location">
    <subcellularLocation>
        <location evidence="1">Cytoplasm</location>
    </subcellularLocation>
</comment>
<comment type="miscellaneous">
    <text evidence="1">The thiolation reaction likely consists of two steps: a first activation step by ATP to form an adenylated intermediate of the target base of tRNA, and a second nucleophilic substitution step of the sulfur (S) atom supplied by the hydrosulfide attached to the Fe-S cluster.</text>
</comment>
<comment type="similarity">
    <text evidence="1">Belongs to the TtcA family.</text>
</comment>
<gene>
    <name evidence="1" type="primary">ttcA</name>
    <name type="ordered locus">Veis_1463</name>
</gene>
<reference key="1">
    <citation type="submission" date="2006-12" db="EMBL/GenBank/DDBJ databases">
        <title>Complete sequence of chromosome 1 of Verminephrobacter eiseniae EF01-2.</title>
        <authorList>
            <person name="Copeland A."/>
            <person name="Lucas S."/>
            <person name="Lapidus A."/>
            <person name="Barry K."/>
            <person name="Detter J.C."/>
            <person name="Glavina del Rio T."/>
            <person name="Dalin E."/>
            <person name="Tice H."/>
            <person name="Pitluck S."/>
            <person name="Chertkov O."/>
            <person name="Brettin T."/>
            <person name="Bruce D."/>
            <person name="Han C."/>
            <person name="Tapia R."/>
            <person name="Gilna P."/>
            <person name="Schmutz J."/>
            <person name="Larimer F."/>
            <person name="Land M."/>
            <person name="Hauser L."/>
            <person name="Kyrpides N."/>
            <person name="Kim E."/>
            <person name="Stahl D."/>
            <person name="Richardson P."/>
        </authorList>
    </citation>
    <scope>NUCLEOTIDE SEQUENCE [LARGE SCALE GENOMIC DNA]</scope>
    <source>
        <strain>EF01-2</strain>
    </source>
</reference>
<organism>
    <name type="scientific">Verminephrobacter eiseniae (strain EF01-2)</name>
    <dbReference type="NCBI Taxonomy" id="391735"/>
    <lineage>
        <taxon>Bacteria</taxon>
        <taxon>Pseudomonadati</taxon>
        <taxon>Pseudomonadota</taxon>
        <taxon>Betaproteobacteria</taxon>
        <taxon>Burkholderiales</taxon>
        <taxon>Comamonadaceae</taxon>
        <taxon>Verminephrobacter</taxon>
    </lineage>
</organism>